<dbReference type="EMBL" id="CP001011">
    <property type="protein sequence ID" value="ACB92108.1"/>
    <property type="molecule type" value="Genomic_DNA"/>
</dbReference>
<dbReference type="SMR" id="B2I9L4"/>
<dbReference type="KEGG" id="xfn:XfasM23_0667"/>
<dbReference type="HOGENOM" id="CLU_059558_1_1_6"/>
<dbReference type="Proteomes" id="UP000001698">
    <property type="component" value="Chromosome"/>
</dbReference>
<dbReference type="GO" id="GO:0005524">
    <property type="term" value="F:ATP binding"/>
    <property type="evidence" value="ECO:0007669"/>
    <property type="project" value="UniProtKB-UniRule"/>
</dbReference>
<dbReference type="GO" id="GO:0005525">
    <property type="term" value="F:GTP binding"/>
    <property type="evidence" value="ECO:0007669"/>
    <property type="project" value="UniProtKB-UniRule"/>
</dbReference>
<dbReference type="Gene3D" id="3.40.50.300">
    <property type="entry name" value="P-loop containing nucleotide triphosphate hydrolases"/>
    <property type="match status" value="1"/>
</dbReference>
<dbReference type="HAMAP" id="MF_00636">
    <property type="entry name" value="RapZ_like"/>
    <property type="match status" value="1"/>
</dbReference>
<dbReference type="InterPro" id="IPR027417">
    <property type="entry name" value="P-loop_NTPase"/>
</dbReference>
<dbReference type="InterPro" id="IPR005337">
    <property type="entry name" value="RapZ-like"/>
</dbReference>
<dbReference type="InterPro" id="IPR053930">
    <property type="entry name" value="RapZ-like_N"/>
</dbReference>
<dbReference type="InterPro" id="IPR053931">
    <property type="entry name" value="RapZ_C"/>
</dbReference>
<dbReference type="NCBIfam" id="NF003828">
    <property type="entry name" value="PRK05416.1"/>
    <property type="match status" value="1"/>
</dbReference>
<dbReference type="PANTHER" id="PTHR30448">
    <property type="entry name" value="RNASE ADAPTER PROTEIN RAPZ"/>
    <property type="match status" value="1"/>
</dbReference>
<dbReference type="PANTHER" id="PTHR30448:SF0">
    <property type="entry name" value="RNASE ADAPTER PROTEIN RAPZ"/>
    <property type="match status" value="1"/>
</dbReference>
<dbReference type="Pfam" id="PF22740">
    <property type="entry name" value="PapZ_C"/>
    <property type="match status" value="1"/>
</dbReference>
<dbReference type="Pfam" id="PF03668">
    <property type="entry name" value="RapZ-like_N"/>
    <property type="match status" value="1"/>
</dbReference>
<dbReference type="PIRSF" id="PIRSF005052">
    <property type="entry name" value="P-loopkin"/>
    <property type="match status" value="1"/>
</dbReference>
<dbReference type="SUPFAM" id="SSF52540">
    <property type="entry name" value="P-loop containing nucleoside triphosphate hydrolases"/>
    <property type="match status" value="1"/>
</dbReference>
<keyword id="KW-0067">ATP-binding</keyword>
<keyword id="KW-0342">GTP-binding</keyword>
<keyword id="KW-0547">Nucleotide-binding</keyword>
<protein>
    <recommendedName>
        <fullName evidence="1">Nucleotide-binding protein XfasM23_0667</fullName>
    </recommendedName>
</protein>
<feature type="chain" id="PRO_1000130796" description="Nucleotide-binding protein XfasM23_0667">
    <location>
        <begin position="1"/>
        <end position="290"/>
    </location>
</feature>
<feature type="binding site" evidence="1">
    <location>
        <begin position="13"/>
        <end position="20"/>
    </location>
    <ligand>
        <name>ATP</name>
        <dbReference type="ChEBI" id="CHEBI:30616"/>
    </ligand>
</feature>
<feature type="binding site" evidence="1">
    <location>
        <begin position="65"/>
        <end position="68"/>
    </location>
    <ligand>
        <name>GTP</name>
        <dbReference type="ChEBI" id="CHEBI:37565"/>
    </ligand>
</feature>
<accession>B2I9L4</accession>
<reference key="1">
    <citation type="journal article" date="2010" name="J. Bacteriol.">
        <title>Whole genome sequences of two Xylella fastidiosa strains (M12 and M23) causing almond leaf scorch disease in California.</title>
        <authorList>
            <person name="Chen J."/>
            <person name="Xie G."/>
            <person name="Han S."/>
            <person name="Chertkov O."/>
            <person name="Sims D."/>
            <person name="Civerolo E.L."/>
        </authorList>
    </citation>
    <scope>NUCLEOTIDE SEQUENCE [LARGE SCALE GENOMIC DNA]</scope>
    <source>
        <strain>M23</strain>
    </source>
</reference>
<name>Y667_XYLF2</name>
<proteinExistence type="inferred from homology"/>
<gene>
    <name type="ordered locus">XfasM23_0667</name>
</gene>
<organism>
    <name type="scientific">Xylella fastidiosa (strain M23)</name>
    <dbReference type="NCBI Taxonomy" id="405441"/>
    <lineage>
        <taxon>Bacteria</taxon>
        <taxon>Pseudomonadati</taxon>
        <taxon>Pseudomonadota</taxon>
        <taxon>Gammaproteobacteria</taxon>
        <taxon>Lysobacterales</taxon>
        <taxon>Lysobacteraceae</taxon>
        <taxon>Xylella</taxon>
    </lineage>
</organism>
<sequence length="290" mass="33307">MKPPEHSLIIISGLSGSGKSVALKTFEDLDYYCSDNLPVELLPHFLRRRLRVAELSDQRIAIGIDIRSGSNISELDQWRHTAKHYNIKAHLLFFDASNETLLKRYADTRRRHPLSHLGLSLPEAIALERELTAPLREAAEAVIDTSTFNVHQLRRHVVTEFALTHSDKLSLLFESFAYKRGVPTEADFVFDARILPNPHWEPELRSLTGRDSNVRDYMEQQPDVILYLTQITEFLDTWLARLQADTRSYVTVAFGCTGGKHRSVYLAEQMARHAREKGWSEVATFHRELE</sequence>
<comment type="function">
    <text evidence="1">Displays ATPase and GTPase activities.</text>
</comment>
<comment type="similarity">
    <text evidence="1">Belongs to the RapZ-like family.</text>
</comment>
<evidence type="ECO:0000255" key="1">
    <source>
        <dbReference type="HAMAP-Rule" id="MF_00636"/>
    </source>
</evidence>